<dbReference type="EC" id="2.1.1.222" evidence="1"/>
<dbReference type="EC" id="2.1.1.64" evidence="1"/>
<dbReference type="EMBL" id="CU928160">
    <property type="protein sequence ID" value="CAQ99154.1"/>
    <property type="molecule type" value="Genomic_DNA"/>
</dbReference>
<dbReference type="RefSeq" id="WP_000990754.1">
    <property type="nucleotide sequence ID" value="NC_011741.1"/>
</dbReference>
<dbReference type="SMR" id="B7M5R7"/>
<dbReference type="KEGG" id="ecr:ECIAI1_2310"/>
<dbReference type="HOGENOM" id="CLU_042432_5_0_6"/>
<dbReference type="UniPathway" id="UPA00232"/>
<dbReference type="GO" id="GO:0102208">
    <property type="term" value="F:2-polyprenyl-6-hydroxyphenol methylase activity"/>
    <property type="evidence" value="ECO:0007669"/>
    <property type="project" value="UniProtKB-EC"/>
</dbReference>
<dbReference type="GO" id="GO:0061542">
    <property type="term" value="F:3-demethylubiquinol 3-O-methyltransferase activity"/>
    <property type="evidence" value="ECO:0007669"/>
    <property type="project" value="UniProtKB-UniRule"/>
</dbReference>
<dbReference type="GO" id="GO:0010420">
    <property type="term" value="F:polyprenyldihydroxybenzoate methyltransferase activity"/>
    <property type="evidence" value="ECO:0007669"/>
    <property type="project" value="InterPro"/>
</dbReference>
<dbReference type="GO" id="GO:0032259">
    <property type="term" value="P:methylation"/>
    <property type="evidence" value="ECO:0007669"/>
    <property type="project" value="UniProtKB-KW"/>
</dbReference>
<dbReference type="CDD" id="cd02440">
    <property type="entry name" value="AdoMet_MTases"/>
    <property type="match status" value="1"/>
</dbReference>
<dbReference type="FunFam" id="3.40.50.150:FF:000028">
    <property type="entry name" value="Ubiquinone biosynthesis O-methyltransferase"/>
    <property type="match status" value="1"/>
</dbReference>
<dbReference type="Gene3D" id="3.40.50.150">
    <property type="entry name" value="Vaccinia Virus protein VP39"/>
    <property type="match status" value="1"/>
</dbReference>
<dbReference type="HAMAP" id="MF_00472">
    <property type="entry name" value="UbiG"/>
    <property type="match status" value="1"/>
</dbReference>
<dbReference type="InterPro" id="IPR029063">
    <property type="entry name" value="SAM-dependent_MTases_sf"/>
</dbReference>
<dbReference type="InterPro" id="IPR010233">
    <property type="entry name" value="UbiG_MeTrfase"/>
</dbReference>
<dbReference type="NCBIfam" id="TIGR01983">
    <property type="entry name" value="UbiG"/>
    <property type="match status" value="1"/>
</dbReference>
<dbReference type="PANTHER" id="PTHR43464">
    <property type="entry name" value="METHYLTRANSFERASE"/>
    <property type="match status" value="1"/>
</dbReference>
<dbReference type="PANTHER" id="PTHR43464:SF19">
    <property type="entry name" value="UBIQUINONE BIOSYNTHESIS O-METHYLTRANSFERASE, MITOCHONDRIAL"/>
    <property type="match status" value="1"/>
</dbReference>
<dbReference type="Pfam" id="PF13489">
    <property type="entry name" value="Methyltransf_23"/>
    <property type="match status" value="1"/>
</dbReference>
<dbReference type="SUPFAM" id="SSF53335">
    <property type="entry name" value="S-adenosyl-L-methionine-dependent methyltransferases"/>
    <property type="match status" value="1"/>
</dbReference>
<evidence type="ECO:0000255" key="1">
    <source>
        <dbReference type="HAMAP-Rule" id="MF_00472"/>
    </source>
</evidence>
<name>UBIG_ECO8A</name>
<reference key="1">
    <citation type="journal article" date="2009" name="PLoS Genet.">
        <title>Organised genome dynamics in the Escherichia coli species results in highly diverse adaptive paths.</title>
        <authorList>
            <person name="Touchon M."/>
            <person name="Hoede C."/>
            <person name="Tenaillon O."/>
            <person name="Barbe V."/>
            <person name="Baeriswyl S."/>
            <person name="Bidet P."/>
            <person name="Bingen E."/>
            <person name="Bonacorsi S."/>
            <person name="Bouchier C."/>
            <person name="Bouvet O."/>
            <person name="Calteau A."/>
            <person name="Chiapello H."/>
            <person name="Clermont O."/>
            <person name="Cruveiller S."/>
            <person name="Danchin A."/>
            <person name="Diard M."/>
            <person name="Dossat C."/>
            <person name="Karoui M.E."/>
            <person name="Frapy E."/>
            <person name="Garry L."/>
            <person name="Ghigo J.M."/>
            <person name="Gilles A.M."/>
            <person name="Johnson J."/>
            <person name="Le Bouguenec C."/>
            <person name="Lescat M."/>
            <person name="Mangenot S."/>
            <person name="Martinez-Jehanne V."/>
            <person name="Matic I."/>
            <person name="Nassif X."/>
            <person name="Oztas S."/>
            <person name="Petit M.A."/>
            <person name="Pichon C."/>
            <person name="Rouy Z."/>
            <person name="Ruf C.S."/>
            <person name="Schneider D."/>
            <person name="Tourret J."/>
            <person name="Vacherie B."/>
            <person name="Vallenet D."/>
            <person name="Medigue C."/>
            <person name="Rocha E.P.C."/>
            <person name="Denamur E."/>
        </authorList>
    </citation>
    <scope>NUCLEOTIDE SEQUENCE [LARGE SCALE GENOMIC DNA]</scope>
    <source>
        <strain>IAI1</strain>
    </source>
</reference>
<comment type="function">
    <text evidence="1">O-methyltransferase that catalyzes the 2 O-methylation steps in the ubiquinone biosynthetic pathway.</text>
</comment>
<comment type="catalytic activity">
    <reaction evidence="1">
        <text>a 3-demethylubiquinol + S-adenosyl-L-methionine = a ubiquinol + S-adenosyl-L-homocysteine + H(+)</text>
        <dbReference type="Rhea" id="RHEA:44380"/>
        <dbReference type="Rhea" id="RHEA-COMP:9566"/>
        <dbReference type="Rhea" id="RHEA-COMP:10914"/>
        <dbReference type="ChEBI" id="CHEBI:15378"/>
        <dbReference type="ChEBI" id="CHEBI:17976"/>
        <dbReference type="ChEBI" id="CHEBI:57856"/>
        <dbReference type="ChEBI" id="CHEBI:59789"/>
        <dbReference type="ChEBI" id="CHEBI:84422"/>
        <dbReference type="EC" id="2.1.1.64"/>
    </reaction>
</comment>
<comment type="catalytic activity">
    <reaction evidence="1">
        <text>a 3-(all-trans-polyprenyl)benzene-1,2-diol + S-adenosyl-L-methionine = a 2-methoxy-6-(all-trans-polyprenyl)phenol + S-adenosyl-L-homocysteine + H(+)</text>
        <dbReference type="Rhea" id="RHEA:31411"/>
        <dbReference type="Rhea" id="RHEA-COMP:9550"/>
        <dbReference type="Rhea" id="RHEA-COMP:9551"/>
        <dbReference type="ChEBI" id="CHEBI:15378"/>
        <dbReference type="ChEBI" id="CHEBI:57856"/>
        <dbReference type="ChEBI" id="CHEBI:59789"/>
        <dbReference type="ChEBI" id="CHEBI:62729"/>
        <dbReference type="ChEBI" id="CHEBI:62731"/>
        <dbReference type="EC" id="2.1.1.222"/>
    </reaction>
</comment>
<comment type="pathway">
    <text evidence="1">Cofactor biosynthesis; ubiquinone biosynthesis.</text>
</comment>
<comment type="similarity">
    <text evidence="1">Belongs to the methyltransferase superfamily. UbiG/COQ3 family.</text>
</comment>
<organism>
    <name type="scientific">Escherichia coli O8 (strain IAI1)</name>
    <dbReference type="NCBI Taxonomy" id="585034"/>
    <lineage>
        <taxon>Bacteria</taxon>
        <taxon>Pseudomonadati</taxon>
        <taxon>Pseudomonadota</taxon>
        <taxon>Gammaproteobacteria</taxon>
        <taxon>Enterobacterales</taxon>
        <taxon>Enterobacteriaceae</taxon>
        <taxon>Escherichia</taxon>
    </lineage>
</organism>
<keyword id="KW-0489">Methyltransferase</keyword>
<keyword id="KW-0949">S-adenosyl-L-methionine</keyword>
<keyword id="KW-0808">Transferase</keyword>
<keyword id="KW-0831">Ubiquinone biosynthesis</keyword>
<proteinExistence type="inferred from homology"/>
<sequence length="240" mass="26585">MNAEKSPENHNVDHEEIAKFEAVASRWWDLEGEFKPLHRINPLRLGYIAERAGGLFGKKVLDVGCGGGILAESMAREGATVTGLDMGFEPLQVAKLHALESGIQVDYVQETVEEHAAKHAGQYDVVTCMEMLEHVPDPQSVVRACAQLVKPGGDVFFSTLNRNGKSWLMAVVGAEYILRMVPKGTHDVKKFIKPAELLGWVDQTSLKERHITGLHYNPLTNTFKLGPGVDVNYMLHTQNK</sequence>
<gene>
    <name evidence="1" type="primary">ubiG</name>
    <name type="ordered locus">ECIAI1_2310</name>
</gene>
<accession>B7M5R7</accession>
<feature type="chain" id="PRO_1000199685" description="Ubiquinone biosynthesis O-methyltransferase">
    <location>
        <begin position="1"/>
        <end position="240"/>
    </location>
</feature>
<feature type="binding site" evidence="1">
    <location>
        <position position="44"/>
    </location>
    <ligand>
        <name>S-adenosyl-L-methionine</name>
        <dbReference type="ChEBI" id="CHEBI:59789"/>
    </ligand>
</feature>
<feature type="binding site" evidence="1">
    <location>
        <position position="64"/>
    </location>
    <ligand>
        <name>S-adenosyl-L-methionine</name>
        <dbReference type="ChEBI" id="CHEBI:59789"/>
    </ligand>
</feature>
<feature type="binding site" evidence="1">
    <location>
        <position position="85"/>
    </location>
    <ligand>
        <name>S-adenosyl-L-methionine</name>
        <dbReference type="ChEBI" id="CHEBI:59789"/>
    </ligand>
</feature>
<feature type="binding site" evidence="1">
    <location>
        <position position="129"/>
    </location>
    <ligand>
        <name>S-adenosyl-L-methionine</name>
        <dbReference type="ChEBI" id="CHEBI:59789"/>
    </ligand>
</feature>
<protein>
    <recommendedName>
        <fullName evidence="1">Ubiquinone biosynthesis O-methyltransferase</fullName>
    </recommendedName>
    <alternativeName>
        <fullName evidence="1">2-octaprenyl-6-hydroxyphenol methylase</fullName>
        <ecNumber evidence="1">2.1.1.222</ecNumber>
    </alternativeName>
    <alternativeName>
        <fullName evidence="1">3-demethylubiquinone-8 3-O-methyltransferase</fullName>
        <ecNumber evidence="1">2.1.1.64</ecNumber>
    </alternativeName>
</protein>